<dbReference type="EMBL" id="AP009377">
    <property type="protein sequence ID" value="BAG16639.1"/>
    <property type="molecule type" value="Genomic_DNA"/>
</dbReference>
<dbReference type="RefSeq" id="YP_001806641.1">
    <property type="nucleotide sequence ID" value="NC_010548.1"/>
</dbReference>
<dbReference type="SMR" id="B1VKC8"/>
<dbReference type="GeneID" id="6166541"/>
<dbReference type="KEGG" id="cjf:6166541"/>
<dbReference type="OrthoDB" id="535480at2759"/>
<dbReference type="GO" id="GO:0009507">
    <property type="term" value="C:chloroplast"/>
    <property type="evidence" value="ECO:0007669"/>
    <property type="project" value="UniProtKB-SubCell"/>
</dbReference>
<dbReference type="GO" id="GO:1990904">
    <property type="term" value="C:ribonucleoprotein complex"/>
    <property type="evidence" value="ECO:0007669"/>
    <property type="project" value="UniProtKB-KW"/>
</dbReference>
<dbReference type="GO" id="GO:0005840">
    <property type="term" value="C:ribosome"/>
    <property type="evidence" value="ECO:0007669"/>
    <property type="project" value="UniProtKB-KW"/>
</dbReference>
<dbReference type="GO" id="GO:0019843">
    <property type="term" value="F:rRNA binding"/>
    <property type="evidence" value="ECO:0007669"/>
    <property type="project" value="UniProtKB-UniRule"/>
</dbReference>
<dbReference type="GO" id="GO:0003735">
    <property type="term" value="F:structural constituent of ribosome"/>
    <property type="evidence" value="ECO:0007669"/>
    <property type="project" value="InterPro"/>
</dbReference>
<dbReference type="GO" id="GO:0006412">
    <property type="term" value="P:translation"/>
    <property type="evidence" value="ECO:0007669"/>
    <property type="project" value="UniProtKB-UniRule"/>
</dbReference>
<dbReference type="Gene3D" id="3.30.420.80">
    <property type="entry name" value="Ribosomal protein S11"/>
    <property type="match status" value="1"/>
</dbReference>
<dbReference type="HAMAP" id="MF_01310">
    <property type="entry name" value="Ribosomal_uS11"/>
    <property type="match status" value="1"/>
</dbReference>
<dbReference type="InterPro" id="IPR001971">
    <property type="entry name" value="Ribosomal_uS11"/>
</dbReference>
<dbReference type="InterPro" id="IPR018102">
    <property type="entry name" value="Ribosomal_uS11_CS"/>
</dbReference>
<dbReference type="InterPro" id="IPR036967">
    <property type="entry name" value="Ribosomal_uS11_sf"/>
</dbReference>
<dbReference type="NCBIfam" id="NF003698">
    <property type="entry name" value="PRK05309.1"/>
    <property type="match status" value="1"/>
</dbReference>
<dbReference type="PANTHER" id="PTHR11759">
    <property type="entry name" value="40S RIBOSOMAL PROTEIN S14/30S RIBOSOMAL PROTEIN S11"/>
    <property type="match status" value="1"/>
</dbReference>
<dbReference type="Pfam" id="PF00411">
    <property type="entry name" value="Ribosomal_S11"/>
    <property type="match status" value="1"/>
</dbReference>
<dbReference type="PIRSF" id="PIRSF002131">
    <property type="entry name" value="Ribosomal_S11"/>
    <property type="match status" value="1"/>
</dbReference>
<dbReference type="SUPFAM" id="SSF53137">
    <property type="entry name" value="Translational machinery components"/>
    <property type="match status" value="1"/>
</dbReference>
<dbReference type="PROSITE" id="PS00054">
    <property type="entry name" value="RIBOSOMAL_S11"/>
    <property type="match status" value="1"/>
</dbReference>
<comment type="subunit">
    <text evidence="1">Part of the 30S ribosomal subunit.</text>
</comment>
<comment type="subcellular location">
    <subcellularLocation>
        <location>Plastid</location>
        <location>Chloroplast</location>
    </subcellularLocation>
</comment>
<comment type="similarity">
    <text evidence="1">Belongs to the universal ribosomal protein uS11 family.</text>
</comment>
<accession>B1VKC8</accession>
<sequence length="132" mass="14484">MPRRATRRFLPRKTKHRILKGVIYVRASFRNTIVTVTDTRGQAVSWSSAGACGFKGTKRRSPFAAQTAAANVVDTLVNQGLLKEAEVMISGPGPGRDTALRAIAQSGIQLSYVRDVTPMPHNGCRPPKRRRV</sequence>
<protein>
    <recommendedName>
        <fullName evidence="1">Small ribosomal subunit protein uS11c</fullName>
    </recommendedName>
    <alternativeName>
        <fullName evidence="2">30S ribosomal protein S11, chloroplastic</fullName>
    </alternativeName>
</protein>
<organism>
    <name type="scientific">Cryptomeria japonica</name>
    <name type="common">Japanese cedar</name>
    <name type="synonym">Cupressus japonica</name>
    <dbReference type="NCBI Taxonomy" id="3369"/>
    <lineage>
        <taxon>Eukaryota</taxon>
        <taxon>Viridiplantae</taxon>
        <taxon>Streptophyta</taxon>
        <taxon>Embryophyta</taxon>
        <taxon>Tracheophyta</taxon>
        <taxon>Spermatophyta</taxon>
        <taxon>Pinopsida</taxon>
        <taxon>Pinidae</taxon>
        <taxon>Conifers II</taxon>
        <taxon>Cupressales</taxon>
        <taxon>Cupressaceae</taxon>
        <taxon>Cryptomeria</taxon>
    </lineage>
</organism>
<feature type="chain" id="PRO_0000364212" description="Small ribosomal subunit protein uS11c">
    <location>
        <begin position="1"/>
        <end position="132"/>
    </location>
</feature>
<evidence type="ECO:0000255" key="1">
    <source>
        <dbReference type="HAMAP-Rule" id="MF_01310"/>
    </source>
</evidence>
<evidence type="ECO:0000305" key="2"/>
<name>RR11_CRYJA</name>
<reference key="1">
    <citation type="journal article" date="2008" name="BMC Plant Biol.">
        <title>Complete nucleotide sequence of the Cryptomeria japonica D. Don. chloroplast genome and comparative chloroplast genomics: diversified genomic structure of coniferous species.</title>
        <authorList>
            <person name="Hirao T."/>
            <person name="Watanabe A."/>
            <person name="Kurita M."/>
            <person name="Kondo T."/>
            <person name="Takata K."/>
        </authorList>
    </citation>
    <scope>NUCLEOTIDE SEQUENCE [LARGE SCALE GENOMIC DNA]</scope>
</reference>
<keyword id="KW-0150">Chloroplast</keyword>
<keyword id="KW-0934">Plastid</keyword>
<keyword id="KW-0687">Ribonucleoprotein</keyword>
<keyword id="KW-0689">Ribosomal protein</keyword>
<keyword id="KW-0694">RNA-binding</keyword>
<keyword id="KW-0699">rRNA-binding</keyword>
<gene>
    <name evidence="1" type="primary">rps11</name>
</gene>
<proteinExistence type="inferred from homology"/>
<geneLocation type="chloroplast"/>